<evidence type="ECO:0000255" key="1">
    <source>
        <dbReference type="HAMAP-Rule" id="MF_01321"/>
    </source>
</evidence>
<evidence type="ECO:0000256" key="2">
    <source>
        <dbReference type="SAM" id="MobiDB-lite"/>
    </source>
</evidence>
<gene>
    <name evidence="1" type="primary">rpoB</name>
    <name type="ordered locus">Bsph_4630</name>
</gene>
<reference key="1">
    <citation type="journal article" date="2008" name="J. Bacteriol.">
        <title>Complete genome sequence of the mosquitocidal bacterium Bacillus sphaericus C3-41 and comparison with those of closely related Bacillus species.</title>
        <authorList>
            <person name="Hu X."/>
            <person name="Fan W."/>
            <person name="Han B."/>
            <person name="Liu H."/>
            <person name="Zheng D."/>
            <person name="Li Q."/>
            <person name="Dong W."/>
            <person name="Yan J."/>
            <person name="Gao M."/>
            <person name="Berry C."/>
            <person name="Yuan Z."/>
        </authorList>
    </citation>
    <scope>NUCLEOTIDE SEQUENCE [LARGE SCALE GENOMIC DNA]</scope>
    <source>
        <strain>C3-41</strain>
    </source>
</reference>
<keyword id="KW-0240">DNA-directed RNA polymerase</keyword>
<keyword id="KW-0548">Nucleotidyltransferase</keyword>
<keyword id="KW-0804">Transcription</keyword>
<keyword id="KW-0808">Transferase</keyword>
<name>RPOB_LYSSC</name>
<accession>B1HMZ6</accession>
<protein>
    <recommendedName>
        <fullName evidence="1">DNA-directed RNA polymerase subunit beta</fullName>
        <shortName evidence="1">RNAP subunit beta</shortName>
        <ecNumber evidence="1">2.7.7.6</ecNumber>
    </recommendedName>
    <alternativeName>
        <fullName evidence="1">RNA polymerase subunit beta</fullName>
    </alternativeName>
    <alternativeName>
        <fullName evidence="1">Transcriptase subunit beta</fullName>
    </alternativeName>
</protein>
<comment type="function">
    <text evidence="1">DNA-dependent RNA polymerase catalyzes the transcription of DNA into RNA using the four ribonucleoside triphosphates as substrates.</text>
</comment>
<comment type="catalytic activity">
    <reaction evidence="1">
        <text>RNA(n) + a ribonucleoside 5'-triphosphate = RNA(n+1) + diphosphate</text>
        <dbReference type="Rhea" id="RHEA:21248"/>
        <dbReference type="Rhea" id="RHEA-COMP:14527"/>
        <dbReference type="Rhea" id="RHEA-COMP:17342"/>
        <dbReference type="ChEBI" id="CHEBI:33019"/>
        <dbReference type="ChEBI" id="CHEBI:61557"/>
        <dbReference type="ChEBI" id="CHEBI:140395"/>
        <dbReference type="EC" id="2.7.7.6"/>
    </reaction>
</comment>
<comment type="subunit">
    <text evidence="1">The RNAP catalytic core consists of 2 alpha, 1 beta, 1 beta' and 1 omega subunit. When a sigma factor is associated with the core the holoenzyme is formed, which can initiate transcription.</text>
</comment>
<comment type="similarity">
    <text evidence="1">Belongs to the RNA polymerase beta chain family.</text>
</comment>
<proteinExistence type="inferred from homology"/>
<organism>
    <name type="scientific">Lysinibacillus sphaericus (strain C3-41)</name>
    <dbReference type="NCBI Taxonomy" id="444177"/>
    <lineage>
        <taxon>Bacteria</taxon>
        <taxon>Bacillati</taxon>
        <taxon>Bacillota</taxon>
        <taxon>Bacilli</taxon>
        <taxon>Bacillales</taxon>
        <taxon>Bacillaceae</taxon>
        <taxon>Lysinibacillus</taxon>
    </lineage>
</organism>
<feature type="chain" id="PRO_1000141708" description="DNA-directed RNA polymerase subunit beta">
    <location>
        <begin position="1"/>
        <end position="1191"/>
    </location>
</feature>
<feature type="region of interest" description="Disordered" evidence="2">
    <location>
        <begin position="1164"/>
        <end position="1191"/>
    </location>
</feature>
<feature type="compositionally biased region" description="Acidic residues" evidence="2">
    <location>
        <begin position="1181"/>
        <end position="1191"/>
    </location>
</feature>
<sequence length="1191" mass="133879">MNELTGQLVQYGQHRQRRSFARIKEVLELPNLIEIQTASYEWFLEEGLREMFRDISPIEDFTGNLSLEFIDYSLGDPKYDVDECKERDVTYAAPLRVKVRLYNKETDEVKEQDVFMGDFPLMTETGTFIINGAERVIVSQLVRSPSVYFHDKTDKNGKKGFGATVIPNRGAWLEYETDAKDVVYVRIDRTRKLPVTVLLRALGFGSDQEIIDIIGDNEYLRNTLEKDNSESTEKALLEIYERLRPGEPPTVESAKSLLYSRFFDAKRYDLANVGRYKMNKKLHIKNRLFNQTIAETLVDPETGEILVEKGTVLDRRTLDKILPYLEDSSKGIGFRTLSQVGGVLEDDVTIQSIKIYAPKDEAQKEINIISNAYIDEEVKNITPADVLSSVSYFFNLLYQVGATDDIDHLGNRRLRSVGELLQNQFRIGLSRMERVVRERMSINDTAAIVPQQLINIRPVIASIKEFFGSSQLSQFMDQTNPLAELTHKRRLSALGPGGLTRERAGFEVRDVHYSHYGRMCPIETPEGPNIGLINSLSSFAKVNKFGFIETPYRRIDHETGQVTDQIDYLTADEEDNYYVAQANSPLNPDGSFANDEVVGRFRGDNTVFNKAQMDYMDVSPKQVVSAATACIPFLENDDSNRALMGANMQRQAVPLLNPEAPFVGTGMEHVDARDSGAAVVAKYDGIVEHVEARSIHVRRIEVVDGKEVKGDLTKYKLQKFIRSNQGTSYNQRPLVKVGERVKPRDILADGPSMEKGELALGRNVLVAFMTWNGFNYEDAVIMSERLVKDDVYTSVHIEEYESESRDTKLGPEEITRDIPNVGEDALRNLDERGIIRIGAEVRDGDILVGKVTPKGVTELTAEERLLHAIFGEKAREVRDTSLRVPHGAGGIILDVKVFNREDGDELPPGVNQLVRAYIVQKRKIRVGDKMAGRHGNKGVISRILPEEDMPFMPDGTPVDIMLNPLGVPSRMNIGQVLELHLGMASRYLGVHMATPVFDGANEEDVWETMEEAGMNRDGKTILYDGRSGEPFDNRVSVGIMYMIKLAHMVDDKLHARSTGPYSLVTQQPLGGKAQFGGQRFGEMEVWALEAYGAAYTLQEILTVKSDDVVGRVKTYEAIVKGESVPEPGVPESFKVLIKELQSLGMDVKMLTVNDEEVELRDLDEEEDLQPADALNIAPQPDTEEEPVESFE</sequence>
<dbReference type="EC" id="2.7.7.6" evidence="1"/>
<dbReference type="EMBL" id="CP000817">
    <property type="protein sequence ID" value="ACA42074.1"/>
    <property type="molecule type" value="Genomic_DNA"/>
</dbReference>
<dbReference type="SMR" id="B1HMZ6"/>
<dbReference type="EnsemblBacteria" id="ACA42074">
    <property type="protein sequence ID" value="ACA42074"/>
    <property type="gene ID" value="Bsph_4630"/>
</dbReference>
<dbReference type="KEGG" id="lsp:Bsph_4630"/>
<dbReference type="HOGENOM" id="CLU_000524_4_1_9"/>
<dbReference type="Proteomes" id="UP000002164">
    <property type="component" value="Chromosome"/>
</dbReference>
<dbReference type="GO" id="GO:0000428">
    <property type="term" value="C:DNA-directed RNA polymerase complex"/>
    <property type="evidence" value="ECO:0007669"/>
    <property type="project" value="UniProtKB-KW"/>
</dbReference>
<dbReference type="GO" id="GO:0003677">
    <property type="term" value="F:DNA binding"/>
    <property type="evidence" value="ECO:0007669"/>
    <property type="project" value="UniProtKB-UniRule"/>
</dbReference>
<dbReference type="GO" id="GO:0003899">
    <property type="term" value="F:DNA-directed RNA polymerase activity"/>
    <property type="evidence" value="ECO:0007669"/>
    <property type="project" value="UniProtKB-UniRule"/>
</dbReference>
<dbReference type="GO" id="GO:0032549">
    <property type="term" value="F:ribonucleoside binding"/>
    <property type="evidence" value="ECO:0007669"/>
    <property type="project" value="InterPro"/>
</dbReference>
<dbReference type="GO" id="GO:0006351">
    <property type="term" value="P:DNA-templated transcription"/>
    <property type="evidence" value="ECO:0007669"/>
    <property type="project" value="UniProtKB-UniRule"/>
</dbReference>
<dbReference type="CDD" id="cd00653">
    <property type="entry name" value="RNA_pol_B_RPB2"/>
    <property type="match status" value="1"/>
</dbReference>
<dbReference type="FunFam" id="3.90.1800.10:FF:000001">
    <property type="entry name" value="DNA-directed RNA polymerase subunit beta"/>
    <property type="match status" value="1"/>
</dbReference>
<dbReference type="Gene3D" id="2.40.50.100">
    <property type="match status" value="1"/>
</dbReference>
<dbReference type="Gene3D" id="2.40.50.150">
    <property type="match status" value="1"/>
</dbReference>
<dbReference type="Gene3D" id="3.90.1100.10">
    <property type="match status" value="3"/>
</dbReference>
<dbReference type="Gene3D" id="2.40.270.10">
    <property type="entry name" value="DNA-directed RNA polymerase, subunit 2, domain 6"/>
    <property type="match status" value="1"/>
</dbReference>
<dbReference type="Gene3D" id="3.90.1800.10">
    <property type="entry name" value="RNA polymerase alpha subunit dimerisation domain"/>
    <property type="match status" value="1"/>
</dbReference>
<dbReference type="Gene3D" id="3.90.1110.10">
    <property type="entry name" value="RNA polymerase Rpb2, domain 2"/>
    <property type="match status" value="1"/>
</dbReference>
<dbReference type="HAMAP" id="MF_01321">
    <property type="entry name" value="RNApol_bact_RpoB"/>
    <property type="match status" value="1"/>
</dbReference>
<dbReference type="InterPro" id="IPR019462">
    <property type="entry name" value="DNA-dir_RNA_pol_bsu_external_1"/>
</dbReference>
<dbReference type="InterPro" id="IPR015712">
    <property type="entry name" value="DNA-dir_RNA_pol_su2"/>
</dbReference>
<dbReference type="InterPro" id="IPR007120">
    <property type="entry name" value="DNA-dir_RNAP_su2_dom"/>
</dbReference>
<dbReference type="InterPro" id="IPR037033">
    <property type="entry name" value="DNA-dir_RNAP_su2_hyb_sf"/>
</dbReference>
<dbReference type="InterPro" id="IPR010243">
    <property type="entry name" value="RNA_pol_bsu_bac"/>
</dbReference>
<dbReference type="InterPro" id="IPR007121">
    <property type="entry name" value="RNA_pol_bsu_CS"/>
</dbReference>
<dbReference type="InterPro" id="IPR007644">
    <property type="entry name" value="RNA_pol_bsu_protrusion"/>
</dbReference>
<dbReference type="InterPro" id="IPR007642">
    <property type="entry name" value="RNA_pol_Rpb2_2"/>
</dbReference>
<dbReference type="InterPro" id="IPR037034">
    <property type="entry name" value="RNA_pol_Rpb2_2_sf"/>
</dbReference>
<dbReference type="InterPro" id="IPR007645">
    <property type="entry name" value="RNA_pol_Rpb2_3"/>
</dbReference>
<dbReference type="InterPro" id="IPR007641">
    <property type="entry name" value="RNA_pol_Rpb2_7"/>
</dbReference>
<dbReference type="InterPro" id="IPR014724">
    <property type="entry name" value="RNA_pol_RPB2_OB-fold"/>
</dbReference>
<dbReference type="NCBIfam" id="NF001616">
    <property type="entry name" value="PRK00405.1"/>
    <property type="match status" value="1"/>
</dbReference>
<dbReference type="NCBIfam" id="TIGR02013">
    <property type="entry name" value="rpoB"/>
    <property type="match status" value="1"/>
</dbReference>
<dbReference type="PANTHER" id="PTHR20856">
    <property type="entry name" value="DNA-DIRECTED RNA POLYMERASE I SUBUNIT 2"/>
    <property type="match status" value="1"/>
</dbReference>
<dbReference type="Pfam" id="PF04563">
    <property type="entry name" value="RNA_pol_Rpb2_1"/>
    <property type="match status" value="1"/>
</dbReference>
<dbReference type="Pfam" id="PF04561">
    <property type="entry name" value="RNA_pol_Rpb2_2"/>
    <property type="match status" value="2"/>
</dbReference>
<dbReference type="Pfam" id="PF04565">
    <property type="entry name" value="RNA_pol_Rpb2_3"/>
    <property type="match status" value="1"/>
</dbReference>
<dbReference type="Pfam" id="PF10385">
    <property type="entry name" value="RNA_pol_Rpb2_45"/>
    <property type="match status" value="1"/>
</dbReference>
<dbReference type="Pfam" id="PF00562">
    <property type="entry name" value="RNA_pol_Rpb2_6"/>
    <property type="match status" value="1"/>
</dbReference>
<dbReference type="Pfam" id="PF04560">
    <property type="entry name" value="RNA_pol_Rpb2_7"/>
    <property type="match status" value="1"/>
</dbReference>
<dbReference type="SUPFAM" id="SSF64484">
    <property type="entry name" value="beta and beta-prime subunits of DNA dependent RNA-polymerase"/>
    <property type="match status" value="1"/>
</dbReference>
<dbReference type="PROSITE" id="PS01166">
    <property type="entry name" value="RNA_POL_BETA"/>
    <property type="match status" value="1"/>
</dbReference>